<gene>
    <name evidence="7" type="primary">oxdC</name>
    <name evidence="8" type="synonym">yvrK</name>
    <name type="ordered locus">BSU33240</name>
</gene>
<organism>
    <name type="scientific">Bacillus subtilis (strain 168)</name>
    <dbReference type="NCBI Taxonomy" id="224308"/>
    <lineage>
        <taxon>Bacteria</taxon>
        <taxon>Bacillati</taxon>
        <taxon>Bacillota</taxon>
        <taxon>Bacilli</taxon>
        <taxon>Bacillales</taxon>
        <taxon>Bacillaceae</taxon>
        <taxon>Bacillus</taxon>
    </lineage>
</organism>
<sequence length="385" mass="43566">MKKQNDIPQPIRGDKGATVKIPRNIERDRQNPDMLVPPETDHGTVSNMKFSFSDTHNRLEKGGYAREVTVRELPISENLASVNMRLKPGAIRELHWHKEAEWAYMIYGSARVTIVDEKGRSFIDDVGEGDLWYFPSGLPHSIQALEEGAEFLLVFDDGSFSENSTFQLTDWLAHTPKEVIAANFGVTKEEISNLPGKEKYIFENQLPGSLKDDIVEGPNGEVPYPFTYRLLEQEPIESEGGKVYIADSTNFKVSKTIASALVTVEPGAMRELHWHPNTHEWQYYISGKARMTVFASDGHARTFNYQAGDVGYVPFAMGHYVENIGDEPLVFLEIFKDDHYADVSLNQWLAMLPETFVQAHLDLGKDFTDVLSKEKHPVVKKKCSK</sequence>
<reference key="1">
    <citation type="journal article" date="1998" name="Microbiology">
        <title>The yvsA-yvqA (293 degrees - 289 degrees) region of the Bacillus subtilis chromosome containing genes involved in metal ion uptake and a putative sigma factor.</title>
        <authorList>
            <person name="Wipat A."/>
            <person name="Brignell C.S."/>
            <person name="Guy J.B."/>
            <person name="Rose M."/>
            <person name="Emmerson P.T."/>
            <person name="Harwood C.R."/>
        </authorList>
    </citation>
    <scope>NUCLEOTIDE SEQUENCE [GENOMIC DNA]</scope>
    <source>
        <strain>168</strain>
    </source>
</reference>
<reference key="2">
    <citation type="journal article" date="1997" name="Nature">
        <title>The complete genome sequence of the Gram-positive bacterium Bacillus subtilis.</title>
        <authorList>
            <person name="Kunst F."/>
            <person name="Ogasawara N."/>
            <person name="Moszer I."/>
            <person name="Albertini A.M."/>
            <person name="Alloni G."/>
            <person name="Azevedo V."/>
            <person name="Bertero M.G."/>
            <person name="Bessieres P."/>
            <person name="Bolotin A."/>
            <person name="Borchert S."/>
            <person name="Borriss R."/>
            <person name="Boursier L."/>
            <person name="Brans A."/>
            <person name="Braun M."/>
            <person name="Brignell S.C."/>
            <person name="Bron S."/>
            <person name="Brouillet S."/>
            <person name="Bruschi C.V."/>
            <person name="Caldwell B."/>
            <person name="Capuano V."/>
            <person name="Carter N.M."/>
            <person name="Choi S.-K."/>
            <person name="Codani J.-J."/>
            <person name="Connerton I.F."/>
            <person name="Cummings N.J."/>
            <person name="Daniel R.A."/>
            <person name="Denizot F."/>
            <person name="Devine K.M."/>
            <person name="Duesterhoeft A."/>
            <person name="Ehrlich S.D."/>
            <person name="Emmerson P.T."/>
            <person name="Entian K.-D."/>
            <person name="Errington J."/>
            <person name="Fabret C."/>
            <person name="Ferrari E."/>
            <person name="Foulger D."/>
            <person name="Fritz C."/>
            <person name="Fujita M."/>
            <person name="Fujita Y."/>
            <person name="Fuma S."/>
            <person name="Galizzi A."/>
            <person name="Galleron N."/>
            <person name="Ghim S.-Y."/>
            <person name="Glaser P."/>
            <person name="Goffeau A."/>
            <person name="Golightly E.J."/>
            <person name="Grandi G."/>
            <person name="Guiseppi G."/>
            <person name="Guy B.J."/>
            <person name="Haga K."/>
            <person name="Haiech J."/>
            <person name="Harwood C.R."/>
            <person name="Henaut A."/>
            <person name="Hilbert H."/>
            <person name="Holsappel S."/>
            <person name="Hosono S."/>
            <person name="Hullo M.-F."/>
            <person name="Itaya M."/>
            <person name="Jones L.-M."/>
            <person name="Joris B."/>
            <person name="Karamata D."/>
            <person name="Kasahara Y."/>
            <person name="Klaerr-Blanchard M."/>
            <person name="Klein C."/>
            <person name="Kobayashi Y."/>
            <person name="Koetter P."/>
            <person name="Koningstein G."/>
            <person name="Krogh S."/>
            <person name="Kumano M."/>
            <person name="Kurita K."/>
            <person name="Lapidus A."/>
            <person name="Lardinois S."/>
            <person name="Lauber J."/>
            <person name="Lazarevic V."/>
            <person name="Lee S.-M."/>
            <person name="Levine A."/>
            <person name="Liu H."/>
            <person name="Masuda S."/>
            <person name="Mauel C."/>
            <person name="Medigue C."/>
            <person name="Medina N."/>
            <person name="Mellado R.P."/>
            <person name="Mizuno M."/>
            <person name="Moestl D."/>
            <person name="Nakai S."/>
            <person name="Noback M."/>
            <person name="Noone D."/>
            <person name="O'Reilly M."/>
            <person name="Ogawa K."/>
            <person name="Ogiwara A."/>
            <person name="Oudega B."/>
            <person name="Park S.-H."/>
            <person name="Parro V."/>
            <person name="Pohl T.M."/>
            <person name="Portetelle D."/>
            <person name="Porwollik S."/>
            <person name="Prescott A.M."/>
            <person name="Presecan E."/>
            <person name="Pujic P."/>
            <person name="Purnelle B."/>
            <person name="Rapoport G."/>
            <person name="Rey M."/>
            <person name="Reynolds S."/>
            <person name="Rieger M."/>
            <person name="Rivolta C."/>
            <person name="Rocha E."/>
            <person name="Roche B."/>
            <person name="Rose M."/>
            <person name="Sadaie Y."/>
            <person name="Sato T."/>
            <person name="Scanlan E."/>
            <person name="Schleich S."/>
            <person name="Schroeter R."/>
            <person name="Scoffone F."/>
            <person name="Sekiguchi J."/>
            <person name="Sekowska A."/>
            <person name="Seror S.J."/>
            <person name="Serror P."/>
            <person name="Shin B.-S."/>
            <person name="Soldo B."/>
            <person name="Sorokin A."/>
            <person name="Tacconi E."/>
            <person name="Takagi T."/>
            <person name="Takahashi H."/>
            <person name="Takemaru K."/>
            <person name="Takeuchi M."/>
            <person name="Tamakoshi A."/>
            <person name="Tanaka T."/>
            <person name="Terpstra P."/>
            <person name="Tognoni A."/>
            <person name="Tosato V."/>
            <person name="Uchiyama S."/>
            <person name="Vandenbol M."/>
            <person name="Vannier F."/>
            <person name="Vassarotti A."/>
            <person name="Viari A."/>
            <person name="Wambutt R."/>
            <person name="Wedler E."/>
            <person name="Wedler H."/>
            <person name="Weitzenegger T."/>
            <person name="Winters P."/>
            <person name="Wipat A."/>
            <person name="Yamamoto H."/>
            <person name="Yamane K."/>
            <person name="Yasumoto K."/>
            <person name="Yata K."/>
            <person name="Yoshida K."/>
            <person name="Yoshikawa H.-F."/>
            <person name="Zumstein E."/>
            <person name="Yoshikawa H."/>
            <person name="Danchin A."/>
        </authorList>
    </citation>
    <scope>NUCLEOTIDE SEQUENCE [LARGE SCALE GENOMIC DNA]</scope>
    <source>
        <strain>168</strain>
    </source>
</reference>
<reference key="3">
    <citation type="journal article" date="2000" name="J. Bacteriol.">
        <title>Bacillus subtilis YvrK is an acid-induced oxalate decarboxylase.</title>
        <authorList>
            <person name="Tanner A."/>
            <person name="Bornemann S."/>
        </authorList>
    </citation>
    <scope>PROTEIN SEQUENCE OF 1-15</scope>
    <scope>FUNCTION</scope>
    <scope>CATALYTIC ACTIVITY</scope>
    <scope>BIOPHYSICOCHEMICAL PROPERTIES</scope>
    <scope>INDUCTION</scope>
</reference>
<reference key="4">
    <citation type="journal article" date="2001" name="J. Biol. Chem.">
        <title>Oxalate decarboxylase requires manganese and dioxygen for activity. Overexpression and characterization of Bacillus subtilis YvrK and YoaN.</title>
        <authorList>
            <person name="Tanner A."/>
            <person name="Bowater L."/>
            <person name="Fairhurst S.A."/>
            <person name="Bornemann S."/>
        </authorList>
    </citation>
    <scope>FUNCTION</scope>
    <scope>CATALYTIC ACTIVITY</scope>
    <scope>COFACTOR</scope>
    <scope>BIOPHYSICOCHEMICAL PROPERTIES</scope>
    <scope>PROBABALE SUBUNIT</scope>
    <scope>PROBABLE SUBCELLULAR LOCATION</scope>
    <source>
        <strain>168</strain>
    </source>
</reference>
<reference key="5">
    <citation type="journal article" date="2008" name="Mol. Microbiol.">
        <title>A previously unidentified sigma factor and two accessory proteins regulate oxalate decarboxylase expression in Bacillus subtilis.</title>
        <authorList>
            <person name="MacLellan S.R."/>
            <person name="Wecke T."/>
            <person name="Helmann J.D."/>
        </authorList>
    </citation>
    <scope>INDUCTION</scope>
    <source>
        <strain>168 / CU1065</strain>
    </source>
</reference>
<reference key="6">
    <citation type="journal article" date="2002" name="Biochemistry">
        <title>Structure of oxalate decarboxylase from Bacillus subtilis at 1.75 A resolution.</title>
        <authorList>
            <person name="Anand R."/>
            <person name="Dorrestein P.C."/>
            <person name="Kinsland C."/>
            <person name="Begley T.P."/>
            <person name="Ealick S.E."/>
        </authorList>
    </citation>
    <scope>X-RAY CRYSTALLOGRAPHY (1.75 ANGSTROMS)</scope>
    <scope>COFACTOR</scope>
    <scope>FUNCTION</scope>
    <scope>CATALYTIC ACTIVITY</scope>
    <scope>ACTIVE SITE</scope>
    <scope>MUTAGENESIS OF ARG-270; GLU-333 AND TYR-340</scope>
</reference>
<name>OXDC_BACSU</name>
<protein>
    <recommendedName>
        <fullName evidence="7">Oxalate decarboxylase OxdC</fullName>
        <ecNumber evidence="3 4 5">4.1.1.2</ecNumber>
    </recommendedName>
</protein>
<feature type="chain" id="PRO_0000058106" description="Oxalate decarboxylase OxdC">
    <location>
        <begin position="1"/>
        <end position="385"/>
    </location>
</feature>
<feature type="domain" description="Cupin type-1 1" evidence="1">
    <location>
        <begin position="50"/>
        <end position="192"/>
    </location>
</feature>
<feature type="domain" description="Cupin type-1 2" evidence="1">
    <location>
        <begin position="228"/>
        <end position="369"/>
    </location>
</feature>
<feature type="region of interest" description="Disordered" evidence="2">
    <location>
        <begin position="24"/>
        <end position="47"/>
    </location>
</feature>
<feature type="active site" description="Proton donor" evidence="5">
    <location>
        <position position="333"/>
    </location>
</feature>
<feature type="binding site" evidence="5">
    <location>
        <position position="95"/>
    </location>
    <ligand>
        <name>Mn(2+)</name>
        <dbReference type="ChEBI" id="CHEBI:29035"/>
        <label>1</label>
    </ligand>
</feature>
<feature type="binding site" evidence="5">
    <location>
        <position position="97"/>
    </location>
    <ligand>
        <name>Mn(2+)</name>
        <dbReference type="ChEBI" id="CHEBI:29035"/>
        <label>1</label>
    </ligand>
</feature>
<feature type="binding site" evidence="5">
    <location>
        <position position="101"/>
    </location>
    <ligand>
        <name>Mn(2+)</name>
        <dbReference type="ChEBI" id="CHEBI:29035"/>
        <label>1</label>
    </ligand>
</feature>
<feature type="binding site" evidence="5">
    <location>
        <position position="140"/>
    </location>
    <ligand>
        <name>Mn(2+)</name>
        <dbReference type="ChEBI" id="CHEBI:29035"/>
        <label>1</label>
    </ligand>
</feature>
<feature type="binding site" evidence="5">
    <location>
        <position position="273"/>
    </location>
    <ligand>
        <name>Mn(2+)</name>
        <dbReference type="ChEBI" id="CHEBI:29035"/>
        <label>2</label>
    </ligand>
</feature>
<feature type="binding site" evidence="5">
    <location>
        <position position="275"/>
    </location>
    <ligand>
        <name>Mn(2+)</name>
        <dbReference type="ChEBI" id="CHEBI:29035"/>
        <label>2</label>
    </ligand>
</feature>
<feature type="binding site" evidence="5">
    <location>
        <position position="280"/>
    </location>
    <ligand>
        <name>Mn(2+)</name>
        <dbReference type="ChEBI" id="CHEBI:29035"/>
        <label>2</label>
    </ligand>
</feature>
<feature type="binding site" evidence="5">
    <location>
        <position position="319"/>
    </location>
    <ligand>
        <name>Mn(2+)</name>
        <dbReference type="ChEBI" id="CHEBI:29035"/>
        <label>2</label>
    </ligand>
</feature>
<feature type="mutagenesis site" description="Leads to a 20-fold reduction of CO(2) production." evidence="5">
    <original>R</original>
    <variation>E</variation>
    <location>
        <position position="270"/>
    </location>
</feature>
<feature type="mutagenesis site" description="Leads to a 25-fold reduction of activity and a 4-fold reduction of CO(2) production." evidence="5">
    <original>E</original>
    <variation>A</variation>
    <location>
        <position position="333"/>
    </location>
</feature>
<feature type="mutagenesis site" description="Leads to a 13-fold reduction of CO(2) production." evidence="5">
    <original>Y</original>
    <variation>F</variation>
    <location>
        <position position="340"/>
    </location>
</feature>
<feature type="strand" evidence="11">
    <location>
        <begin position="10"/>
        <end position="12"/>
    </location>
</feature>
<feature type="helix" evidence="11">
    <location>
        <begin position="25"/>
        <end position="30"/>
    </location>
</feature>
<feature type="helix" evidence="11">
    <location>
        <begin position="32"/>
        <end position="35"/>
    </location>
</feature>
<feature type="strand" evidence="11">
    <location>
        <begin position="49"/>
        <end position="51"/>
    </location>
</feature>
<feature type="helix" evidence="11">
    <location>
        <begin position="52"/>
        <end position="54"/>
    </location>
</feature>
<feature type="strand" evidence="11">
    <location>
        <begin position="58"/>
        <end position="60"/>
    </location>
</feature>
<feature type="strand" evidence="11">
    <location>
        <begin position="63"/>
        <end position="68"/>
    </location>
</feature>
<feature type="turn" evidence="11">
    <location>
        <begin position="70"/>
        <end position="72"/>
    </location>
</feature>
<feature type="strand" evidence="11">
    <location>
        <begin position="80"/>
        <end position="86"/>
    </location>
</feature>
<feature type="strand" evidence="11">
    <location>
        <begin position="91"/>
        <end position="96"/>
    </location>
</feature>
<feature type="strand" evidence="11">
    <location>
        <begin position="101"/>
        <end position="115"/>
    </location>
</feature>
<feature type="strand" evidence="11">
    <location>
        <begin position="121"/>
        <end position="127"/>
    </location>
</feature>
<feature type="strand" evidence="11">
    <location>
        <begin position="130"/>
        <end position="134"/>
    </location>
</feature>
<feature type="strand" evidence="11">
    <location>
        <begin position="140"/>
        <end position="156"/>
    </location>
</feature>
<feature type="helix" evidence="11">
    <location>
        <begin position="162"/>
        <end position="164"/>
    </location>
</feature>
<feature type="strand" evidence="11">
    <location>
        <begin position="165"/>
        <end position="167"/>
    </location>
</feature>
<feature type="helix" evidence="11">
    <location>
        <begin position="168"/>
        <end position="173"/>
    </location>
</feature>
<feature type="helix" evidence="11">
    <location>
        <begin position="177"/>
        <end position="184"/>
    </location>
</feature>
<feature type="helix" evidence="11">
    <location>
        <begin position="189"/>
        <end position="191"/>
    </location>
</feature>
<feature type="strand" evidence="11">
    <location>
        <begin position="200"/>
        <end position="202"/>
    </location>
</feature>
<feature type="helix" evidence="11">
    <location>
        <begin position="210"/>
        <end position="213"/>
    </location>
</feature>
<feature type="strand" evidence="11">
    <location>
        <begin position="226"/>
        <end position="229"/>
    </location>
</feature>
<feature type="helix" evidence="11">
    <location>
        <begin position="230"/>
        <end position="232"/>
    </location>
</feature>
<feature type="strand" evidence="11">
    <location>
        <begin position="236"/>
        <end position="238"/>
    </location>
</feature>
<feature type="strand" evidence="11">
    <location>
        <begin position="241"/>
        <end position="246"/>
    </location>
</feature>
<feature type="turn" evidence="11">
    <location>
        <begin position="248"/>
        <end position="250"/>
    </location>
</feature>
<feature type="strand" evidence="11">
    <location>
        <begin position="258"/>
        <end position="264"/>
    </location>
</feature>
<feature type="strand" evidence="11">
    <location>
        <begin position="268"/>
        <end position="274"/>
    </location>
</feature>
<feature type="strand" evidence="11">
    <location>
        <begin position="276"/>
        <end position="278"/>
    </location>
</feature>
<feature type="strand" evidence="11">
    <location>
        <begin position="280"/>
        <end position="296"/>
    </location>
</feature>
<feature type="strand" evidence="11">
    <location>
        <begin position="299"/>
        <end position="306"/>
    </location>
</feature>
<feature type="strand" evidence="11">
    <location>
        <begin position="309"/>
        <end position="313"/>
    </location>
</feature>
<feature type="strand" evidence="11">
    <location>
        <begin position="318"/>
        <end position="323"/>
    </location>
</feature>
<feature type="strand" evidence="11">
    <location>
        <begin position="325"/>
        <end position="327"/>
    </location>
</feature>
<feature type="strand" evidence="11">
    <location>
        <begin position="329"/>
        <end position="339"/>
    </location>
</feature>
<feature type="helix" evidence="11">
    <location>
        <begin position="345"/>
        <end position="350"/>
    </location>
</feature>
<feature type="helix" evidence="11">
    <location>
        <begin position="354"/>
        <end position="361"/>
    </location>
</feature>
<feature type="helix" evidence="11">
    <location>
        <begin position="365"/>
        <end position="368"/>
    </location>
</feature>
<feature type="strand" evidence="11">
    <location>
        <begin position="377"/>
        <end position="380"/>
    </location>
</feature>
<proteinExistence type="evidence at protein level"/>
<dbReference type="EC" id="4.1.1.2" evidence="3 4 5"/>
<dbReference type="EMBL" id="AJ223978">
    <property type="protein sequence ID" value="CAA11727.1"/>
    <property type="molecule type" value="Genomic_DNA"/>
</dbReference>
<dbReference type="EMBL" id="AL009126">
    <property type="protein sequence ID" value="CAB15314.1"/>
    <property type="molecule type" value="Genomic_DNA"/>
</dbReference>
<dbReference type="PIR" id="E70047">
    <property type="entry name" value="E70047"/>
</dbReference>
<dbReference type="RefSeq" id="NP_391204.1">
    <property type="nucleotide sequence ID" value="NC_000964.3"/>
</dbReference>
<dbReference type="RefSeq" id="WP_003243476.1">
    <property type="nucleotide sequence ID" value="NZ_OZ025638.1"/>
</dbReference>
<dbReference type="PDB" id="1J58">
    <property type="method" value="X-ray"/>
    <property type="resolution" value="1.75 A"/>
    <property type="chains" value="A=1-385"/>
</dbReference>
<dbReference type="PDB" id="1L3J">
    <property type="method" value="X-ray"/>
    <property type="resolution" value="1.90 A"/>
    <property type="chains" value="A=1-385"/>
</dbReference>
<dbReference type="PDB" id="1UW8">
    <property type="method" value="X-ray"/>
    <property type="resolution" value="2.00 A"/>
    <property type="chains" value="A=1-385"/>
</dbReference>
<dbReference type="PDB" id="2UY8">
    <property type="method" value="X-ray"/>
    <property type="resolution" value="2.80 A"/>
    <property type="chains" value="A=1-385"/>
</dbReference>
<dbReference type="PDB" id="2UY9">
    <property type="method" value="X-ray"/>
    <property type="resolution" value="3.10 A"/>
    <property type="chains" value="A=1-385"/>
</dbReference>
<dbReference type="PDB" id="2UYA">
    <property type="method" value="X-ray"/>
    <property type="resolution" value="2.00 A"/>
    <property type="chains" value="A=1-385"/>
</dbReference>
<dbReference type="PDB" id="2UYB">
    <property type="method" value="X-ray"/>
    <property type="resolution" value="2.10 A"/>
    <property type="chains" value="A=1-385"/>
</dbReference>
<dbReference type="PDB" id="2V09">
    <property type="method" value="X-ray"/>
    <property type="resolution" value="1.80 A"/>
    <property type="chains" value="A=1-385"/>
</dbReference>
<dbReference type="PDB" id="3S0M">
    <property type="method" value="X-ray"/>
    <property type="resolution" value="2.31 A"/>
    <property type="chains" value="A=6-382"/>
</dbReference>
<dbReference type="PDB" id="4MET">
    <property type="method" value="X-ray"/>
    <property type="resolution" value="2.10 A"/>
    <property type="chains" value="A/B/C/D=1-382"/>
</dbReference>
<dbReference type="PDB" id="5HI0">
    <property type="method" value="X-ray"/>
    <property type="resolution" value="2.60 A"/>
    <property type="chains" value="A=1-385"/>
</dbReference>
<dbReference type="PDB" id="5VG3">
    <property type="method" value="X-ray"/>
    <property type="resolution" value="1.45 A"/>
    <property type="chains" value="A/B/C=1-382"/>
</dbReference>
<dbReference type="PDB" id="6TZP">
    <property type="method" value="X-ray"/>
    <property type="resolution" value="1.72 A"/>
    <property type="chains" value="A=1-385"/>
</dbReference>
<dbReference type="PDB" id="6UFI">
    <property type="method" value="X-ray"/>
    <property type="resolution" value="1.72 A"/>
    <property type="chains" value="A=1-385"/>
</dbReference>
<dbReference type="PDBsum" id="1J58"/>
<dbReference type="PDBsum" id="1L3J"/>
<dbReference type="PDBsum" id="1UW8"/>
<dbReference type="PDBsum" id="2UY8"/>
<dbReference type="PDBsum" id="2UY9"/>
<dbReference type="PDBsum" id="2UYA"/>
<dbReference type="PDBsum" id="2UYB"/>
<dbReference type="PDBsum" id="2V09"/>
<dbReference type="PDBsum" id="3S0M"/>
<dbReference type="PDBsum" id="4MET"/>
<dbReference type="PDBsum" id="5HI0"/>
<dbReference type="PDBsum" id="5VG3"/>
<dbReference type="PDBsum" id="6TZP"/>
<dbReference type="PDBsum" id="6UFI"/>
<dbReference type="SMR" id="O34714"/>
<dbReference type="FunCoup" id="O34714">
    <property type="interactions" value="83"/>
</dbReference>
<dbReference type="STRING" id="224308.BSU33240"/>
<dbReference type="DrugBank" id="DB01942">
    <property type="generic name" value="Formic acid"/>
</dbReference>
<dbReference type="jPOST" id="O34714"/>
<dbReference type="PaxDb" id="224308-BSU33240"/>
<dbReference type="EnsemblBacteria" id="CAB15314">
    <property type="protein sequence ID" value="CAB15314"/>
    <property type="gene ID" value="BSU_33240"/>
</dbReference>
<dbReference type="GeneID" id="938620"/>
<dbReference type="KEGG" id="bsu:BSU33240"/>
<dbReference type="PATRIC" id="fig|224308.179.peg.3608"/>
<dbReference type="eggNOG" id="COG2140">
    <property type="taxonomic scope" value="Bacteria"/>
</dbReference>
<dbReference type="InParanoid" id="O34714"/>
<dbReference type="OrthoDB" id="1973590at2"/>
<dbReference type="PhylomeDB" id="O34714"/>
<dbReference type="BioCyc" id="BSUB:BSU33240-MONOMER"/>
<dbReference type="BioCyc" id="MetaCyc:BSU33240-MONOMER"/>
<dbReference type="BRENDA" id="4.1.1.2">
    <property type="organism ID" value="658"/>
</dbReference>
<dbReference type="SABIO-RK" id="O34714"/>
<dbReference type="EvolutionaryTrace" id="O34714"/>
<dbReference type="Proteomes" id="UP000001570">
    <property type="component" value="Chromosome"/>
</dbReference>
<dbReference type="GO" id="GO:0005737">
    <property type="term" value="C:cytoplasm"/>
    <property type="evidence" value="ECO:0007669"/>
    <property type="project" value="UniProtKB-SubCell"/>
</dbReference>
<dbReference type="GO" id="GO:0046872">
    <property type="term" value="F:metal ion binding"/>
    <property type="evidence" value="ECO:0007669"/>
    <property type="project" value="UniProtKB-KW"/>
</dbReference>
<dbReference type="GO" id="GO:0046564">
    <property type="term" value="F:oxalate decarboxylase activity"/>
    <property type="evidence" value="ECO:0007669"/>
    <property type="project" value="UniProtKB-EC"/>
</dbReference>
<dbReference type="GO" id="GO:0033609">
    <property type="term" value="P:oxalate metabolic process"/>
    <property type="evidence" value="ECO:0007669"/>
    <property type="project" value="InterPro"/>
</dbReference>
<dbReference type="CDD" id="cd20305">
    <property type="entry name" value="cupin_OxDC_C"/>
    <property type="match status" value="1"/>
</dbReference>
<dbReference type="CDD" id="cd20304">
    <property type="entry name" value="cupin_OxDC_N"/>
    <property type="match status" value="1"/>
</dbReference>
<dbReference type="Gene3D" id="2.60.120.10">
    <property type="entry name" value="Jelly Rolls"/>
    <property type="match status" value="2"/>
</dbReference>
<dbReference type="InterPro" id="IPR017774">
    <property type="entry name" value="Bicupin_oxalate_deCO2ase/Oxase"/>
</dbReference>
<dbReference type="InterPro" id="IPR006045">
    <property type="entry name" value="Cupin_1"/>
</dbReference>
<dbReference type="InterPro" id="IPR051610">
    <property type="entry name" value="GPI/OXD"/>
</dbReference>
<dbReference type="InterPro" id="IPR014710">
    <property type="entry name" value="RmlC-like_jellyroll"/>
</dbReference>
<dbReference type="InterPro" id="IPR011051">
    <property type="entry name" value="RmlC_Cupin_sf"/>
</dbReference>
<dbReference type="NCBIfam" id="TIGR03404">
    <property type="entry name" value="bicupin_oxalic"/>
    <property type="match status" value="1"/>
</dbReference>
<dbReference type="PANTHER" id="PTHR35848">
    <property type="entry name" value="OXALATE-BINDING PROTEIN"/>
    <property type="match status" value="1"/>
</dbReference>
<dbReference type="PANTHER" id="PTHR35848:SF9">
    <property type="entry name" value="SLL1358 PROTEIN"/>
    <property type="match status" value="1"/>
</dbReference>
<dbReference type="Pfam" id="PF00190">
    <property type="entry name" value="Cupin_1"/>
    <property type="match status" value="2"/>
</dbReference>
<dbReference type="SMART" id="SM00835">
    <property type="entry name" value="Cupin_1"/>
    <property type="match status" value="2"/>
</dbReference>
<dbReference type="SUPFAM" id="SSF51182">
    <property type="entry name" value="RmlC-like cupins"/>
    <property type="match status" value="1"/>
</dbReference>
<keyword id="KW-0002">3D-structure</keyword>
<keyword id="KW-0963">Cytoplasm</keyword>
<keyword id="KW-0210">Decarboxylase</keyword>
<keyword id="KW-0903">Direct protein sequencing</keyword>
<keyword id="KW-0456">Lyase</keyword>
<keyword id="KW-0464">Manganese</keyword>
<keyword id="KW-0479">Metal-binding</keyword>
<keyword id="KW-1185">Reference proteome</keyword>
<accession>O34714</accession>
<evidence type="ECO:0000255" key="1"/>
<evidence type="ECO:0000256" key="2">
    <source>
        <dbReference type="SAM" id="MobiDB-lite"/>
    </source>
</evidence>
<evidence type="ECO:0000269" key="3">
    <source>
    </source>
</evidence>
<evidence type="ECO:0000269" key="4">
    <source>
    </source>
</evidence>
<evidence type="ECO:0000269" key="5">
    <source>
    </source>
</evidence>
<evidence type="ECO:0000269" key="6">
    <source>
    </source>
</evidence>
<evidence type="ECO:0000303" key="7">
    <source>
    </source>
</evidence>
<evidence type="ECO:0000303" key="8">
    <source>
    </source>
</evidence>
<evidence type="ECO:0000305" key="9"/>
<evidence type="ECO:0000305" key="10">
    <source>
    </source>
</evidence>
<evidence type="ECO:0007829" key="11">
    <source>
        <dbReference type="PDB" id="5VG3"/>
    </source>
</evidence>
<comment type="function">
    <text evidence="3 4 5">Converts oxalate to formate and CO(2) in an O(2)-dependent reaction. Can also catalyze minor side reactions: oxalate oxidation to produce H(2)O(2), and oxalate-dependent, H(2)O(2)-independent dye oxidations.</text>
</comment>
<comment type="catalytic activity">
    <reaction evidence="3 4 5">
        <text>oxalate + H(+) = formate + CO2</text>
        <dbReference type="Rhea" id="RHEA:16509"/>
        <dbReference type="ChEBI" id="CHEBI:15378"/>
        <dbReference type="ChEBI" id="CHEBI:15740"/>
        <dbReference type="ChEBI" id="CHEBI:16526"/>
        <dbReference type="ChEBI" id="CHEBI:30623"/>
        <dbReference type="EC" id="4.1.1.2"/>
    </reaction>
</comment>
<comment type="cofactor">
    <cofactor evidence="4 5">
        <name>Mn(2+)</name>
        <dbReference type="ChEBI" id="CHEBI:29035"/>
    </cofactor>
    <text evidence="5">Binds 2 manganese ions per subunit.</text>
</comment>
<comment type="biophysicochemical properties">
    <kinetics>
        <KM evidence="4">15 mM for oxalate</KM>
        <Vmax evidence="4">75.0 umol/min/mg enzyme</Vmax>
    </kinetics>
    <phDependence>
        <text evidence="3">Optimum pH is 5.0.</text>
    </phDependence>
</comment>
<comment type="subunit">
    <text evidence="4 5">Homohexamer.</text>
</comment>
<comment type="subcellular location">
    <subcellularLocation>
        <location evidence="10">Cytoplasm</location>
    </subcellularLocation>
</comment>
<comment type="induction">
    <text evidence="3 6">Induced by acid pH but not by oxalate (PubMed:10960116). Positively regulated by SigO and its coactivator RsoA (PubMed:18573182).</text>
</comment>
<comment type="similarity">
    <text evidence="9">To B.subtilis OxdD.</text>
</comment>